<gene>
    <name evidence="1" type="primary">nrdR</name>
    <name type="ordered locus">MGAS9429_Spy0284</name>
</gene>
<evidence type="ECO:0000255" key="1">
    <source>
        <dbReference type="HAMAP-Rule" id="MF_00440"/>
    </source>
</evidence>
<organism>
    <name type="scientific">Streptococcus pyogenes serotype M12 (strain MGAS9429)</name>
    <dbReference type="NCBI Taxonomy" id="370551"/>
    <lineage>
        <taxon>Bacteria</taxon>
        <taxon>Bacillati</taxon>
        <taxon>Bacillota</taxon>
        <taxon>Bacilli</taxon>
        <taxon>Lactobacillales</taxon>
        <taxon>Streptococcaceae</taxon>
        <taxon>Streptococcus</taxon>
    </lineage>
</organism>
<reference key="1">
    <citation type="journal article" date="2006" name="Proc. Natl. Acad. Sci. U.S.A.">
        <title>Molecular genetic anatomy of inter- and intraserotype variation in the human bacterial pathogen group A Streptococcus.</title>
        <authorList>
            <person name="Beres S.B."/>
            <person name="Richter E.W."/>
            <person name="Nagiec M.J."/>
            <person name="Sumby P."/>
            <person name="Porcella S.F."/>
            <person name="DeLeo F.R."/>
            <person name="Musser J.M."/>
        </authorList>
    </citation>
    <scope>NUCLEOTIDE SEQUENCE [LARGE SCALE GENOMIC DNA]</scope>
    <source>
        <strain>MGAS9429</strain>
    </source>
</reference>
<proteinExistence type="inferred from homology"/>
<comment type="function">
    <text evidence="1">Negatively regulates transcription of bacterial ribonucleotide reductase nrd genes and operons by binding to NrdR-boxes.</text>
</comment>
<comment type="cofactor">
    <cofactor evidence="1">
        <name>Zn(2+)</name>
        <dbReference type="ChEBI" id="CHEBI:29105"/>
    </cofactor>
    <text evidence="1">Binds 1 zinc ion.</text>
</comment>
<comment type="similarity">
    <text evidence="1">Belongs to the NrdR family.</text>
</comment>
<feature type="chain" id="PRO_0000264218" description="Transcriptional repressor NrdR">
    <location>
        <begin position="1"/>
        <end position="164"/>
    </location>
</feature>
<feature type="domain" description="ATP-cone" evidence="1">
    <location>
        <begin position="49"/>
        <end position="139"/>
    </location>
</feature>
<feature type="zinc finger region" evidence="1">
    <location>
        <begin position="3"/>
        <end position="34"/>
    </location>
</feature>
<dbReference type="EMBL" id="CP000259">
    <property type="protein sequence ID" value="ABF31472.1"/>
    <property type="molecule type" value="Genomic_DNA"/>
</dbReference>
<dbReference type="RefSeq" id="WP_002985941.1">
    <property type="nucleotide sequence ID" value="NC_008021.1"/>
</dbReference>
<dbReference type="SMR" id="Q1JNC7"/>
<dbReference type="GeneID" id="69901381"/>
<dbReference type="KEGG" id="spk:MGAS9429_Spy0284"/>
<dbReference type="HOGENOM" id="CLU_108412_0_0_9"/>
<dbReference type="Proteomes" id="UP000002433">
    <property type="component" value="Chromosome"/>
</dbReference>
<dbReference type="GO" id="GO:0005524">
    <property type="term" value="F:ATP binding"/>
    <property type="evidence" value="ECO:0007669"/>
    <property type="project" value="UniProtKB-KW"/>
</dbReference>
<dbReference type="GO" id="GO:0003677">
    <property type="term" value="F:DNA binding"/>
    <property type="evidence" value="ECO:0007669"/>
    <property type="project" value="UniProtKB-KW"/>
</dbReference>
<dbReference type="GO" id="GO:0008270">
    <property type="term" value="F:zinc ion binding"/>
    <property type="evidence" value="ECO:0007669"/>
    <property type="project" value="UniProtKB-UniRule"/>
</dbReference>
<dbReference type="GO" id="GO:0045892">
    <property type="term" value="P:negative regulation of DNA-templated transcription"/>
    <property type="evidence" value="ECO:0007669"/>
    <property type="project" value="UniProtKB-UniRule"/>
</dbReference>
<dbReference type="HAMAP" id="MF_00440">
    <property type="entry name" value="NrdR"/>
    <property type="match status" value="1"/>
</dbReference>
<dbReference type="InterPro" id="IPR005144">
    <property type="entry name" value="ATP-cone_dom"/>
</dbReference>
<dbReference type="InterPro" id="IPR055173">
    <property type="entry name" value="NrdR-like_N"/>
</dbReference>
<dbReference type="InterPro" id="IPR003796">
    <property type="entry name" value="RNR_NrdR-like"/>
</dbReference>
<dbReference type="NCBIfam" id="TIGR00244">
    <property type="entry name" value="transcriptional regulator NrdR"/>
    <property type="match status" value="1"/>
</dbReference>
<dbReference type="PANTHER" id="PTHR30455">
    <property type="entry name" value="TRANSCRIPTIONAL REPRESSOR NRDR"/>
    <property type="match status" value="1"/>
</dbReference>
<dbReference type="PANTHER" id="PTHR30455:SF2">
    <property type="entry name" value="TRANSCRIPTIONAL REPRESSOR NRDR"/>
    <property type="match status" value="1"/>
</dbReference>
<dbReference type="Pfam" id="PF03477">
    <property type="entry name" value="ATP-cone"/>
    <property type="match status" value="1"/>
</dbReference>
<dbReference type="Pfam" id="PF22811">
    <property type="entry name" value="Zn_ribbon_NrdR"/>
    <property type="match status" value="1"/>
</dbReference>
<dbReference type="PROSITE" id="PS51161">
    <property type="entry name" value="ATP_CONE"/>
    <property type="match status" value="1"/>
</dbReference>
<protein>
    <recommendedName>
        <fullName evidence="1">Transcriptional repressor NrdR</fullName>
    </recommendedName>
</protein>
<keyword id="KW-0067">ATP-binding</keyword>
<keyword id="KW-0238">DNA-binding</keyword>
<keyword id="KW-0479">Metal-binding</keyword>
<keyword id="KW-0547">Nucleotide-binding</keyword>
<keyword id="KW-0678">Repressor</keyword>
<keyword id="KW-0804">Transcription</keyword>
<keyword id="KW-0805">Transcription regulation</keyword>
<keyword id="KW-0862">Zinc</keyword>
<keyword id="KW-0863">Zinc-finger</keyword>
<name>NRDR_STRPC</name>
<accession>Q1JNC7</accession>
<sequence length="164" mass="19131">MRCPKCNYHKSSVVDSRQAEDGNTIRRRRECEQCHTRFTTFERVEELPLLVIKKDGTREQFSRDKILNGVVQSAQKRPVSSTDIENVISRIEQEVRTTYENEVSSTAIGNLVMDELAELDEITYVRFASVYKSFKDVDEIEELLQQITNRVRGKKKRLNNDETN</sequence>